<gene>
    <name evidence="1" type="primary">rpl18</name>
    <name type="ordered locus">Maeo_1403</name>
</gene>
<name>RL18_META3</name>
<organism>
    <name type="scientific">Methanococcus aeolicus (strain ATCC BAA-1280 / DSM 17508 / OCM 812 / Nankai-3)</name>
    <dbReference type="NCBI Taxonomy" id="419665"/>
    <lineage>
        <taxon>Archaea</taxon>
        <taxon>Methanobacteriati</taxon>
        <taxon>Methanobacteriota</taxon>
        <taxon>Methanomada group</taxon>
        <taxon>Methanococci</taxon>
        <taxon>Methanococcales</taxon>
        <taxon>Methanococcaceae</taxon>
        <taxon>Methanococcus</taxon>
    </lineage>
</organism>
<proteinExistence type="inferred from homology"/>
<evidence type="ECO:0000255" key="1">
    <source>
        <dbReference type="HAMAP-Rule" id="MF_01337"/>
    </source>
</evidence>
<evidence type="ECO:0000305" key="2"/>
<accession>A6UWV7</accession>
<protein>
    <recommendedName>
        <fullName evidence="1">Large ribosomal subunit protein uL18</fullName>
    </recommendedName>
    <alternativeName>
        <fullName evidence="2">50S ribosomal protein L18</fullName>
    </alternativeName>
</protein>
<comment type="function">
    <text evidence="1">This is one of the proteins that bind and probably mediate the attachment of the 5S RNA into the large ribosomal subunit, where it forms part of the central protuberance.</text>
</comment>
<comment type="subunit">
    <text evidence="1">Part of the 50S ribosomal subunit. Contacts the 5S and 23S rRNAs.</text>
</comment>
<comment type="similarity">
    <text evidence="1">Belongs to the universal ribosomal protein uL18 family.</text>
</comment>
<keyword id="KW-0687">Ribonucleoprotein</keyword>
<keyword id="KW-0689">Ribosomal protein</keyword>
<keyword id="KW-0694">RNA-binding</keyword>
<keyword id="KW-0699">rRNA-binding</keyword>
<feature type="chain" id="PRO_1000053053" description="Large ribosomal subunit protein uL18">
    <location>
        <begin position="1"/>
        <end position="194"/>
    </location>
</feature>
<sequence>MAHGAKYRVPFRRRREGKTNFRLRLKLLLSRTPRLVARKSLNNIVAQIVEYDEVGDKIVVSAHSKEIVKLGYKGHCGNVPAAYLTGLLLGKKALKEGNEEAILDLGLNSATKGAAVLAILKGAVDAGMDIPHSEEILPGEDRINGSHVKEYAELLKVEDEEKYNKQFSKYLKNGLNPEDLPEHFEEIKEKILSL</sequence>
<dbReference type="EMBL" id="CP000743">
    <property type="protein sequence ID" value="ABR56979.1"/>
    <property type="molecule type" value="Genomic_DNA"/>
</dbReference>
<dbReference type="RefSeq" id="WP_011974111.1">
    <property type="nucleotide sequence ID" value="NC_009635.1"/>
</dbReference>
<dbReference type="SMR" id="A6UWV7"/>
<dbReference type="STRING" id="419665.Maeo_1403"/>
<dbReference type="GeneID" id="5327455"/>
<dbReference type="KEGG" id="mae:Maeo_1403"/>
<dbReference type="eggNOG" id="arCOG04088">
    <property type="taxonomic scope" value="Archaea"/>
</dbReference>
<dbReference type="HOGENOM" id="CLU_056222_2_0_2"/>
<dbReference type="OrthoDB" id="8644at2157"/>
<dbReference type="Proteomes" id="UP000001106">
    <property type="component" value="Chromosome"/>
</dbReference>
<dbReference type="GO" id="GO:0022625">
    <property type="term" value="C:cytosolic large ribosomal subunit"/>
    <property type="evidence" value="ECO:0007669"/>
    <property type="project" value="TreeGrafter"/>
</dbReference>
<dbReference type="GO" id="GO:0008097">
    <property type="term" value="F:5S rRNA binding"/>
    <property type="evidence" value="ECO:0007669"/>
    <property type="project" value="InterPro"/>
</dbReference>
<dbReference type="GO" id="GO:0003735">
    <property type="term" value="F:structural constituent of ribosome"/>
    <property type="evidence" value="ECO:0007669"/>
    <property type="project" value="InterPro"/>
</dbReference>
<dbReference type="GO" id="GO:0000027">
    <property type="term" value="P:ribosomal large subunit assembly"/>
    <property type="evidence" value="ECO:0007669"/>
    <property type="project" value="TreeGrafter"/>
</dbReference>
<dbReference type="GO" id="GO:0006412">
    <property type="term" value="P:translation"/>
    <property type="evidence" value="ECO:0007669"/>
    <property type="project" value="UniProtKB-UniRule"/>
</dbReference>
<dbReference type="CDD" id="cd00432">
    <property type="entry name" value="Ribosomal_L18_L5e"/>
    <property type="match status" value="1"/>
</dbReference>
<dbReference type="Gene3D" id="3.30.420.100">
    <property type="match status" value="1"/>
</dbReference>
<dbReference type="HAMAP" id="MF_01337_A">
    <property type="entry name" value="Ribosomal_uL18_A"/>
    <property type="match status" value="1"/>
</dbReference>
<dbReference type="InterPro" id="IPR005485">
    <property type="entry name" value="Rbsml_uL18_euk"/>
</dbReference>
<dbReference type="NCBIfam" id="NF006342">
    <property type="entry name" value="PRK08569.1"/>
    <property type="match status" value="1"/>
</dbReference>
<dbReference type="PANTHER" id="PTHR23410:SF12">
    <property type="entry name" value="LARGE RIBOSOMAL SUBUNIT PROTEIN UL18"/>
    <property type="match status" value="1"/>
</dbReference>
<dbReference type="PANTHER" id="PTHR23410">
    <property type="entry name" value="RIBOSOMAL PROTEIN L5-RELATED"/>
    <property type="match status" value="1"/>
</dbReference>
<dbReference type="Pfam" id="PF17144">
    <property type="entry name" value="Ribosomal_L5e"/>
    <property type="match status" value="2"/>
</dbReference>
<dbReference type="SUPFAM" id="SSF53137">
    <property type="entry name" value="Translational machinery components"/>
    <property type="match status" value="1"/>
</dbReference>
<reference key="1">
    <citation type="submission" date="2007-06" db="EMBL/GenBank/DDBJ databases">
        <title>Complete sequence of Methanococcus aeolicus Nankai-3.</title>
        <authorList>
            <consortium name="US DOE Joint Genome Institute"/>
            <person name="Copeland A."/>
            <person name="Lucas S."/>
            <person name="Lapidus A."/>
            <person name="Barry K."/>
            <person name="Glavina del Rio T."/>
            <person name="Dalin E."/>
            <person name="Tice H."/>
            <person name="Pitluck S."/>
            <person name="Chain P."/>
            <person name="Malfatti S."/>
            <person name="Shin M."/>
            <person name="Vergez L."/>
            <person name="Schmutz J."/>
            <person name="Larimer F."/>
            <person name="Land M."/>
            <person name="Hauser L."/>
            <person name="Kyrpides N."/>
            <person name="Lykidis A."/>
            <person name="Sieprawska-Lupa M."/>
            <person name="Whitman W.B."/>
            <person name="Richardson P."/>
        </authorList>
    </citation>
    <scope>NUCLEOTIDE SEQUENCE [LARGE SCALE GENOMIC DNA]</scope>
    <source>
        <strain>ATCC BAA-1280 / DSM 17508 / OCM 812 / Nankai-3</strain>
    </source>
</reference>